<accession>A7MGZ5</accession>
<proteinExistence type="inferred from homology"/>
<dbReference type="EC" id="4.2.2.n1" evidence="1"/>
<dbReference type="EMBL" id="CP000783">
    <property type="protein sequence ID" value="ABU75981.1"/>
    <property type="molecule type" value="Genomic_DNA"/>
</dbReference>
<dbReference type="RefSeq" id="WP_012124025.1">
    <property type="nucleotide sequence ID" value="NC_009778.1"/>
</dbReference>
<dbReference type="SMR" id="A7MGZ5"/>
<dbReference type="CAZy" id="GH23">
    <property type="family name" value="Glycoside Hydrolase Family 23"/>
</dbReference>
<dbReference type="KEGG" id="esa:ESA_00703"/>
<dbReference type="PATRIC" id="fig|290339.8.peg.621"/>
<dbReference type="HOGENOM" id="CLU_027494_0_1_6"/>
<dbReference type="Proteomes" id="UP000000260">
    <property type="component" value="Chromosome"/>
</dbReference>
<dbReference type="GO" id="GO:0009279">
    <property type="term" value="C:cell outer membrane"/>
    <property type="evidence" value="ECO:0007669"/>
    <property type="project" value="UniProtKB-SubCell"/>
</dbReference>
<dbReference type="GO" id="GO:0008933">
    <property type="term" value="F:peptidoglycan lytic transglycosylase activity"/>
    <property type="evidence" value="ECO:0007669"/>
    <property type="project" value="UniProtKB-UniRule"/>
</dbReference>
<dbReference type="GO" id="GO:0016998">
    <property type="term" value="P:cell wall macromolecule catabolic process"/>
    <property type="evidence" value="ECO:0007669"/>
    <property type="project" value="UniProtKB-UniRule"/>
</dbReference>
<dbReference type="GO" id="GO:0071555">
    <property type="term" value="P:cell wall organization"/>
    <property type="evidence" value="ECO:0007669"/>
    <property type="project" value="UniProtKB-KW"/>
</dbReference>
<dbReference type="GO" id="GO:0009253">
    <property type="term" value="P:peptidoglycan catabolic process"/>
    <property type="evidence" value="ECO:0007669"/>
    <property type="project" value="TreeGrafter"/>
</dbReference>
<dbReference type="CDD" id="cd13403">
    <property type="entry name" value="MLTF-like"/>
    <property type="match status" value="1"/>
</dbReference>
<dbReference type="CDD" id="cd01009">
    <property type="entry name" value="PBP2_YfhD_N"/>
    <property type="match status" value="1"/>
</dbReference>
<dbReference type="FunFam" id="1.10.530.10:FF:000003">
    <property type="entry name" value="Membrane-bound lytic murein transglycosylase F"/>
    <property type="match status" value="1"/>
</dbReference>
<dbReference type="Gene3D" id="1.10.530.10">
    <property type="match status" value="1"/>
</dbReference>
<dbReference type="Gene3D" id="3.40.190.10">
    <property type="entry name" value="Periplasmic binding protein-like II"/>
    <property type="match status" value="2"/>
</dbReference>
<dbReference type="HAMAP" id="MF_02016">
    <property type="entry name" value="MltF"/>
    <property type="match status" value="1"/>
</dbReference>
<dbReference type="InterPro" id="IPR023346">
    <property type="entry name" value="Lysozyme-like_dom_sf"/>
</dbReference>
<dbReference type="InterPro" id="IPR023703">
    <property type="entry name" value="MltF"/>
</dbReference>
<dbReference type="InterPro" id="IPR001638">
    <property type="entry name" value="Solute-binding_3/MltF_N"/>
</dbReference>
<dbReference type="InterPro" id="IPR008258">
    <property type="entry name" value="Transglycosylase_SLT_dom_1"/>
</dbReference>
<dbReference type="NCBIfam" id="NF008112">
    <property type="entry name" value="PRK10859.1"/>
    <property type="match status" value="1"/>
</dbReference>
<dbReference type="PANTHER" id="PTHR35936">
    <property type="entry name" value="MEMBRANE-BOUND LYTIC MUREIN TRANSGLYCOSYLASE F"/>
    <property type="match status" value="1"/>
</dbReference>
<dbReference type="PANTHER" id="PTHR35936:SF32">
    <property type="entry name" value="MEMBRANE-BOUND LYTIC MUREIN TRANSGLYCOSYLASE F"/>
    <property type="match status" value="1"/>
</dbReference>
<dbReference type="Pfam" id="PF00497">
    <property type="entry name" value="SBP_bac_3"/>
    <property type="match status" value="1"/>
</dbReference>
<dbReference type="Pfam" id="PF01464">
    <property type="entry name" value="SLT"/>
    <property type="match status" value="1"/>
</dbReference>
<dbReference type="SMART" id="SM00062">
    <property type="entry name" value="PBPb"/>
    <property type="match status" value="1"/>
</dbReference>
<dbReference type="SUPFAM" id="SSF53955">
    <property type="entry name" value="Lysozyme-like"/>
    <property type="match status" value="1"/>
</dbReference>
<dbReference type="SUPFAM" id="SSF53850">
    <property type="entry name" value="Periplasmic binding protein-like II"/>
    <property type="match status" value="1"/>
</dbReference>
<evidence type="ECO:0000255" key="1">
    <source>
        <dbReference type="HAMAP-Rule" id="MF_02016"/>
    </source>
</evidence>
<evidence type="ECO:0000256" key="2">
    <source>
        <dbReference type="SAM" id="MobiDB-lite"/>
    </source>
</evidence>
<protein>
    <recommendedName>
        <fullName evidence="1">Membrane-bound lytic murein transglycosylase F</fullName>
        <ecNumber evidence="1">4.2.2.n1</ecNumber>
    </recommendedName>
    <alternativeName>
        <fullName evidence="1">Murein lyase F</fullName>
    </alternativeName>
</protein>
<gene>
    <name evidence="1" type="primary">mltF</name>
    <name type="ordered locus">ESA_00703</name>
</gene>
<feature type="signal peptide" evidence="1">
    <location>
        <begin position="1"/>
        <end position="32"/>
    </location>
</feature>
<feature type="chain" id="PRO_0000353936" description="Membrane-bound lytic murein transglycosylase F">
    <location>
        <begin position="33"/>
        <end position="519"/>
    </location>
</feature>
<feature type="region of interest" description="Non-LT domain" evidence="1">
    <location>
        <begin position="33"/>
        <end position="269"/>
    </location>
</feature>
<feature type="region of interest" description="LT domain" evidence="1">
    <location>
        <begin position="270"/>
        <end position="519"/>
    </location>
</feature>
<feature type="region of interest" description="Disordered" evidence="2">
    <location>
        <begin position="495"/>
        <end position="519"/>
    </location>
</feature>
<feature type="compositionally biased region" description="Polar residues" evidence="2">
    <location>
        <begin position="508"/>
        <end position="519"/>
    </location>
</feature>
<feature type="active site" evidence="1">
    <location>
        <position position="314"/>
    </location>
</feature>
<comment type="function">
    <text evidence="1">Murein-degrading enzyme that degrades murein glycan strands and insoluble, high-molecular weight murein sacculi, with the concomitant formation of a 1,6-anhydromuramoyl product. Lytic transglycosylases (LTs) play an integral role in the metabolism of the peptidoglycan (PG) sacculus. Their lytic action creates space within the PG sacculus to allow for its expansion as well as for the insertion of various structures such as secretion systems and flagella.</text>
</comment>
<comment type="catalytic activity">
    <reaction evidence="1">
        <text>Exolytic cleavage of the (1-&gt;4)-beta-glycosidic linkage between N-acetylmuramic acid (MurNAc) and N-acetylglucosamine (GlcNAc) residues in peptidoglycan, from either the reducing or the non-reducing ends of the peptidoglycan chains, with concomitant formation of a 1,6-anhydrobond in the MurNAc residue.</text>
        <dbReference type="EC" id="4.2.2.n1"/>
    </reaction>
</comment>
<comment type="subcellular location">
    <subcellularLocation>
        <location>Cell outer membrane</location>
        <topology>Peripheral membrane protein</topology>
    </subcellularLocation>
    <text evidence="1">Attached to the inner leaflet of the outer membrane.</text>
</comment>
<comment type="domain">
    <text evidence="1">The N-terminal domain does not have lytic activity and probably modulates enzymatic activity. The C-terminal domain is the catalytic active domain.</text>
</comment>
<comment type="similarity">
    <text evidence="1">In the N-terminal section; belongs to the bacterial solute-binding protein 3 family.</text>
</comment>
<comment type="similarity">
    <text evidence="1">In the C-terminal section; belongs to the transglycosylase Slt family.</text>
</comment>
<keyword id="KW-0998">Cell outer membrane</keyword>
<keyword id="KW-0961">Cell wall biogenesis/degradation</keyword>
<keyword id="KW-0456">Lyase</keyword>
<keyword id="KW-0472">Membrane</keyword>
<keyword id="KW-1185">Reference proteome</keyword>
<keyword id="KW-0732">Signal</keyword>
<name>MLTF_CROS8</name>
<organism>
    <name type="scientific">Cronobacter sakazakii (strain ATCC BAA-894)</name>
    <name type="common">Enterobacter sakazakii</name>
    <dbReference type="NCBI Taxonomy" id="290339"/>
    <lineage>
        <taxon>Bacteria</taxon>
        <taxon>Pseudomonadati</taxon>
        <taxon>Pseudomonadota</taxon>
        <taxon>Gammaproteobacteria</taxon>
        <taxon>Enterobacterales</taxon>
        <taxon>Enterobacteriaceae</taxon>
        <taxon>Cronobacter</taxon>
    </lineage>
</organism>
<sequence length="519" mass="57617">MKKLKLNYLLIGVVTLLLAVALWPAIPWSGKADNRIAAIQARGVLRVSTIATPLTMYRAGDTMSGLDYELSQAFADYLGVKLKITVRQNISQLFDDLDNNDADLLAAGLVYNEARSQHYQAGPIYYSVSQQMVYRVGSLRPRSLASIKEGQLTIAPGHVAQSELEQLKASKYPDLTWRVDPKLSSNELMLQVAQGTLDYTIADSVAISLFQRVHPQLAVALDLSDEQPVTWFSRRSSDNSLSAALLDFFNQINEDGTLARLEEKYLGHGNDFDYVDTRSFLRAVDSVLPELQPLFEKYATDIDWRLLAAISYQESHWDSQATSPTGVRGLMMLTRNTAQSLGLTDRLDAEQSISGGARYLKDMMSKVPESVPEEERIWFALAAYNMGYAHMLDARALTAKQKGNPDSWSDVKQRLPLLSQRPYYSKLTYGYARGHEAYAYVENIRKYQISLVGYLLEKEKQAAAAAQPKLVQSYPTNITPQGLFPSPFSSLPLGPFSQAGAGGKTHSALPNTLSPVSPR</sequence>
<reference key="1">
    <citation type="journal article" date="2010" name="PLoS ONE">
        <title>Genome sequence of Cronobacter sakazakii BAA-894 and comparative genomic hybridization analysis with other Cronobacter species.</title>
        <authorList>
            <person name="Kucerova E."/>
            <person name="Clifton S.W."/>
            <person name="Xia X.Q."/>
            <person name="Long F."/>
            <person name="Porwollik S."/>
            <person name="Fulton L."/>
            <person name="Fronick C."/>
            <person name="Minx P."/>
            <person name="Kyung K."/>
            <person name="Warren W."/>
            <person name="Fulton R."/>
            <person name="Feng D."/>
            <person name="Wollam A."/>
            <person name="Shah N."/>
            <person name="Bhonagiri V."/>
            <person name="Nash W.E."/>
            <person name="Hallsworth-Pepin K."/>
            <person name="Wilson R.K."/>
            <person name="McClelland M."/>
            <person name="Forsythe S.J."/>
        </authorList>
    </citation>
    <scope>NUCLEOTIDE SEQUENCE [LARGE SCALE GENOMIC DNA]</scope>
    <source>
        <strain>ATCC BAA-894</strain>
    </source>
</reference>